<keyword id="KW-0150">Chloroplast</keyword>
<keyword id="KW-0472">Membrane</keyword>
<keyword id="KW-0520">NAD</keyword>
<keyword id="KW-0521">NADP</keyword>
<keyword id="KW-0934">Plastid</keyword>
<keyword id="KW-0618">Plastoquinone</keyword>
<keyword id="KW-0874">Quinone</keyword>
<keyword id="KW-0793">Thylakoid</keyword>
<keyword id="KW-1278">Translocase</keyword>
<keyword id="KW-0812">Transmembrane</keyword>
<keyword id="KW-1133">Transmembrane helix</keyword>
<keyword id="KW-0813">Transport</keyword>
<geneLocation type="chloroplast"/>
<accession>A7Y3K7</accession>
<evidence type="ECO:0000250" key="1"/>
<evidence type="ECO:0000255" key="2"/>
<evidence type="ECO:0000305" key="3"/>
<sequence length="710" mass="80827">MEQTYQYAWIIPFVPLLVPMLIGAGLLIFPTVTKNLRRMWSFQSVLLLSIVMAFSIYLSIQQINRGSIYQYVWSWIINNDFSLEFGYLIDPLTSIMSILVTTVGILVLIYSDNYMAHDQGYLRFFTYMSFFCAAMLGLVTSSNFIQIYIFWELVGLCSYLLIGFWFTRPGAANACQKAFVTNRVGDFGLLLGILGFYWITGSFEFRELFQILNNLISSKEVNLLFVTLCAALLFVGAIAKSAQFPLHVWLPDAMEGPTPISALIHAATLVAAGIFLVARLLPLFLVIPYIMYFISLIGIITVLLGATLALAQQDIKRGLAYSTMSQLGYMMVALGMGSYRSALFHLITHAYSKALLFLAAGSVIHSMETIIGYSPEKSQNMVIMGGLTKHVPITKGAFLLGTLSLCGIPPLACFWSKDEILNDSWLYSPIFALIAWGTVGLTAFYMFRIYLMTFEGHLNVGFKNYSGKKNNPADSMSLWGKKGSKPINKNFRFFTIDEKGENQTKISYTSDPFESENTMLFPQILLCFVTFVIGFLGIPKELGFNLDILTQWLHPAIYLLHHTNSTDLAEFLKHTVISGGIAYCGIFIAFLLYKPTYSSFKSFLLINSLHQKSLKRVIRDKIVFVIYDWAYNRAYIDTFYKNFFVCQVRRFSQIIRSFDLRIIDQIFNCFAFLSFIASEGIKYLGYARIPFYLFFYFFFVSIFIFLFYKN</sequence>
<organism>
    <name type="scientific">Ipomoea purpurea</name>
    <name type="common">Common morning glory</name>
    <name type="synonym">Pharbitis purpurea</name>
    <dbReference type="NCBI Taxonomy" id="4121"/>
    <lineage>
        <taxon>Eukaryota</taxon>
        <taxon>Viridiplantae</taxon>
        <taxon>Streptophyta</taxon>
        <taxon>Embryophyta</taxon>
        <taxon>Tracheophyta</taxon>
        <taxon>Spermatophyta</taxon>
        <taxon>Magnoliopsida</taxon>
        <taxon>eudicotyledons</taxon>
        <taxon>Gunneridae</taxon>
        <taxon>Pentapetalae</taxon>
        <taxon>asterids</taxon>
        <taxon>lamiids</taxon>
        <taxon>Solanales</taxon>
        <taxon>Convolvulaceae</taxon>
        <taxon>Ipomoeeae</taxon>
        <taxon>Ipomoea</taxon>
    </lineage>
</organism>
<comment type="function">
    <text evidence="1">NDH shuttles electrons from NAD(P)H:plastoquinone, via FMN and iron-sulfur (Fe-S) centers, to quinones in the photosynthetic chain and possibly in a chloroplast respiratory chain. The immediate electron acceptor for the enzyme in this species is believed to be plastoquinone. Couples the redox reaction to proton translocation, and thus conserves the redox energy in a proton gradient (By similarity).</text>
</comment>
<comment type="catalytic activity">
    <reaction>
        <text>a plastoquinone + NADH + (n+1) H(+)(in) = a plastoquinol + NAD(+) + n H(+)(out)</text>
        <dbReference type="Rhea" id="RHEA:42608"/>
        <dbReference type="Rhea" id="RHEA-COMP:9561"/>
        <dbReference type="Rhea" id="RHEA-COMP:9562"/>
        <dbReference type="ChEBI" id="CHEBI:15378"/>
        <dbReference type="ChEBI" id="CHEBI:17757"/>
        <dbReference type="ChEBI" id="CHEBI:57540"/>
        <dbReference type="ChEBI" id="CHEBI:57945"/>
        <dbReference type="ChEBI" id="CHEBI:62192"/>
    </reaction>
</comment>
<comment type="catalytic activity">
    <reaction>
        <text>a plastoquinone + NADPH + (n+1) H(+)(in) = a plastoquinol + NADP(+) + n H(+)(out)</text>
        <dbReference type="Rhea" id="RHEA:42612"/>
        <dbReference type="Rhea" id="RHEA-COMP:9561"/>
        <dbReference type="Rhea" id="RHEA-COMP:9562"/>
        <dbReference type="ChEBI" id="CHEBI:15378"/>
        <dbReference type="ChEBI" id="CHEBI:17757"/>
        <dbReference type="ChEBI" id="CHEBI:57783"/>
        <dbReference type="ChEBI" id="CHEBI:58349"/>
        <dbReference type="ChEBI" id="CHEBI:62192"/>
    </reaction>
</comment>
<comment type="subunit">
    <text evidence="1">NDH is composed of at least 16 different subunits, 5 of which are encoded in the nucleus.</text>
</comment>
<comment type="subcellular location">
    <subcellularLocation>
        <location evidence="1">Plastid</location>
        <location evidence="1">Chloroplast thylakoid membrane</location>
        <topology evidence="1">Multi-pass membrane protein</topology>
    </subcellularLocation>
</comment>
<comment type="similarity">
    <text evidence="3">Belongs to the complex I subunit 5 family.</text>
</comment>
<protein>
    <recommendedName>
        <fullName>NAD(P)H-quinone oxidoreductase subunit 5, chloroplastic</fullName>
        <ecNumber>7.1.1.-</ecNumber>
    </recommendedName>
    <alternativeName>
        <fullName>NAD(P)H dehydrogenase subunit 5</fullName>
    </alternativeName>
    <alternativeName>
        <fullName>NADH-plastoquinone oxidoreductase subunit 5</fullName>
    </alternativeName>
</protein>
<reference key="1">
    <citation type="journal article" date="2007" name="BMC Plant Biol.">
        <title>Complete plastid genome sequences suggest strong selection for retention of photosynthetic genes in the parasitic plant genus Cuscuta.</title>
        <authorList>
            <person name="McNeal J.R."/>
            <person name="Kuehl J.V."/>
            <person name="Boore J.L."/>
            <person name="dePamphilis C.W."/>
        </authorList>
    </citation>
    <scope>NUCLEOTIDE SEQUENCE [LARGE SCALE GENOMIC DNA]</scope>
</reference>
<feature type="chain" id="PRO_0000360941" description="NAD(P)H-quinone oxidoreductase subunit 5, chloroplastic">
    <location>
        <begin position="1"/>
        <end position="710"/>
    </location>
</feature>
<feature type="transmembrane region" description="Helical" evidence="2">
    <location>
        <begin position="9"/>
        <end position="29"/>
    </location>
</feature>
<feature type="transmembrane region" description="Helical" evidence="2">
    <location>
        <begin position="40"/>
        <end position="60"/>
    </location>
</feature>
<feature type="transmembrane region" description="Helical" evidence="2">
    <location>
        <begin position="89"/>
        <end position="109"/>
    </location>
</feature>
<feature type="transmembrane region" description="Helical" evidence="2">
    <location>
        <begin position="125"/>
        <end position="145"/>
    </location>
</feature>
<feature type="transmembrane region" description="Helical" evidence="2">
    <location>
        <begin position="147"/>
        <end position="167"/>
    </location>
</feature>
<feature type="transmembrane region" description="Helical" evidence="2">
    <location>
        <begin position="185"/>
        <end position="205"/>
    </location>
</feature>
<feature type="transmembrane region" description="Helical" evidence="2">
    <location>
        <begin position="221"/>
        <end position="241"/>
    </location>
</feature>
<feature type="transmembrane region" description="Helical" evidence="2">
    <location>
        <begin position="258"/>
        <end position="278"/>
    </location>
</feature>
<feature type="transmembrane region" description="Helical" evidence="2">
    <location>
        <begin position="280"/>
        <end position="300"/>
    </location>
</feature>
<feature type="transmembrane region" description="Helical" evidence="2">
    <location>
        <begin position="327"/>
        <end position="347"/>
    </location>
</feature>
<feature type="transmembrane region" description="Helical" evidence="2">
    <location>
        <begin position="354"/>
        <end position="374"/>
    </location>
</feature>
<feature type="transmembrane region" description="Helical" evidence="2">
    <location>
        <begin position="396"/>
        <end position="416"/>
    </location>
</feature>
<feature type="transmembrane region" description="Helical" evidence="2">
    <location>
        <begin position="425"/>
        <end position="445"/>
    </location>
</feature>
<feature type="transmembrane region" description="Helical" evidence="2">
    <location>
        <begin position="519"/>
        <end position="539"/>
    </location>
</feature>
<feature type="transmembrane region" description="Helical" evidence="2">
    <location>
        <begin position="571"/>
        <end position="591"/>
    </location>
</feature>
<feature type="transmembrane region" description="Helical" evidence="2">
    <location>
        <begin position="657"/>
        <end position="676"/>
    </location>
</feature>
<feature type="transmembrane region" description="Helical" evidence="2">
    <location>
        <begin position="689"/>
        <end position="709"/>
    </location>
</feature>
<gene>
    <name type="primary">ndhF</name>
</gene>
<name>NU5C_IPOPU</name>
<dbReference type="EC" id="7.1.1.-"/>
<dbReference type="EMBL" id="EU118126">
    <property type="protein sequence ID" value="ABV02398.1"/>
    <property type="molecule type" value="Genomic_DNA"/>
</dbReference>
<dbReference type="RefSeq" id="YP_001468358.1">
    <property type="nucleotide sequence ID" value="NC_009808.1"/>
</dbReference>
<dbReference type="SMR" id="A7Y3K7"/>
<dbReference type="GeneID" id="5601312"/>
<dbReference type="GO" id="GO:0009535">
    <property type="term" value="C:chloroplast thylakoid membrane"/>
    <property type="evidence" value="ECO:0007669"/>
    <property type="project" value="UniProtKB-SubCell"/>
</dbReference>
<dbReference type="GO" id="GO:0008137">
    <property type="term" value="F:NADH dehydrogenase (ubiquinone) activity"/>
    <property type="evidence" value="ECO:0007669"/>
    <property type="project" value="InterPro"/>
</dbReference>
<dbReference type="GO" id="GO:0048038">
    <property type="term" value="F:quinone binding"/>
    <property type="evidence" value="ECO:0007669"/>
    <property type="project" value="UniProtKB-KW"/>
</dbReference>
<dbReference type="GO" id="GO:0042773">
    <property type="term" value="P:ATP synthesis coupled electron transport"/>
    <property type="evidence" value="ECO:0007669"/>
    <property type="project" value="InterPro"/>
</dbReference>
<dbReference type="GO" id="GO:0015990">
    <property type="term" value="P:electron transport coupled proton transport"/>
    <property type="evidence" value="ECO:0007669"/>
    <property type="project" value="TreeGrafter"/>
</dbReference>
<dbReference type="Gene3D" id="1.20.5.2700">
    <property type="match status" value="1"/>
</dbReference>
<dbReference type="InterPro" id="IPR002128">
    <property type="entry name" value="NADH_UbQ_OxRdtase_chlpt_su5_C"/>
</dbReference>
<dbReference type="InterPro" id="IPR018393">
    <property type="entry name" value="NADHpl_OxRdtase_5_subgr"/>
</dbReference>
<dbReference type="InterPro" id="IPR001750">
    <property type="entry name" value="ND/Mrp_TM"/>
</dbReference>
<dbReference type="InterPro" id="IPR003945">
    <property type="entry name" value="NU5C-like"/>
</dbReference>
<dbReference type="InterPro" id="IPR001516">
    <property type="entry name" value="Proton_antipo_N"/>
</dbReference>
<dbReference type="NCBIfam" id="TIGR01974">
    <property type="entry name" value="NDH_I_L"/>
    <property type="match status" value="1"/>
</dbReference>
<dbReference type="NCBIfam" id="NF005141">
    <property type="entry name" value="PRK06590.1"/>
    <property type="match status" value="1"/>
</dbReference>
<dbReference type="PANTHER" id="PTHR42829">
    <property type="entry name" value="NADH-UBIQUINONE OXIDOREDUCTASE CHAIN 5"/>
    <property type="match status" value="1"/>
</dbReference>
<dbReference type="PANTHER" id="PTHR42829:SF2">
    <property type="entry name" value="NADH-UBIQUINONE OXIDOREDUCTASE CHAIN 5"/>
    <property type="match status" value="1"/>
</dbReference>
<dbReference type="Pfam" id="PF01010">
    <property type="entry name" value="Proton_antipo_C"/>
    <property type="match status" value="2"/>
</dbReference>
<dbReference type="Pfam" id="PF00361">
    <property type="entry name" value="Proton_antipo_M"/>
    <property type="match status" value="1"/>
</dbReference>
<dbReference type="Pfam" id="PF00662">
    <property type="entry name" value="Proton_antipo_N"/>
    <property type="match status" value="1"/>
</dbReference>
<dbReference type="PRINTS" id="PR01434">
    <property type="entry name" value="NADHDHGNASE5"/>
</dbReference>
<dbReference type="PRINTS" id="PR01435">
    <property type="entry name" value="NPOXDRDTASE5"/>
</dbReference>
<proteinExistence type="inferred from homology"/>